<reference key="1">
    <citation type="journal article" date="2002" name="J. Mol. Microbiol. Biotechnol.">
        <title>The genome of Methanosarcina mazei: evidence for lateral gene transfer between Bacteria and Archaea.</title>
        <authorList>
            <person name="Deppenmeier U."/>
            <person name="Johann A."/>
            <person name="Hartsch T."/>
            <person name="Merkl R."/>
            <person name="Schmitz R.A."/>
            <person name="Martinez-Arias R."/>
            <person name="Henne A."/>
            <person name="Wiezer A."/>
            <person name="Baeumer S."/>
            <person name="Jacobi C."/>
            <person name="Brueggemann H."/>
            <person name="Lienard T."/>
            <person name="Christmann A."/>
            <person name="Boemecke M."/>
            <person name="Steckel S."/>
            <person name="Bhattacharyya A."/>
            <person name="Lykidis A."/>
            <person name="Overbeek R."/>
            <person name="Klenk H.-P."/>
            <person name="Gunsalus R.P."/>
            <person name="Fritz H.-J."/>
            <person name="Gottschalk G."/>
        </authorList>
    </citation>
    <scope>NUCLEOTIDE SEQUENCE [LARGE SCALE GENOMIC DNA]</scope>
    <source>
        <strain>ATCC BAA-159 / DSM 3647 / Goe1 / Go1 / JCM 11833 / OCM 88</strain>
    </source>
</reference>
<proteinExistence type="inferred from homology"/>
<sequence length="146" mass="16601">METELMRIGVSLPDTLLGKFDEIIEKRGYSSRSEAIRDSIRSYISYNEWMGNIKGHHVGTIVIIYDHTQRGLSNVLTDIQHHYSHLIRSSIHIYPDREDCFEIVVLEGEGKEITELAEAIMALKGVKLSKLITTESNETDEPSIVI</sequence>
<organism>
    <name type="scientific">Methanosarcina mazei (strain ATCC BAA-159 / DSM 3647 / Goe1 / Go1 / JCM 11833 / OCM 88)</name>
    <name type="common">Methanosarcina frisia</name>
    <dbReference type="NCBI Taxonomy" id="192952"/>
    <lineage>
        <taxon>Archaea</taxon>
        <taxon>Methanobacteriati</taxon>
        <taxon>Methanobacteriota</taxon>
        <taxon>Stenosarchaea group</taxon>
        <taxon>Methanomicrobia</taxon>
        <taxon>Methanosarcinales</taxon>
        <taxon>Methanosarcinaceae</taxon>
        <taxon>Methanosarcina</taxon>
    </lineage>
</organism>
<name>NIKR1_METMA</name>
<protein>
    <recommendedName>
        <fullName>Putative nickel-responsive regulator 1</fullName>
    </recommendedName>
</protein>
<evidence type="ECO:0000250" key="1"/>
<evidence type="ECO:0000255" key="2"/>
<evidence type="ECO:0000305" key="3"/>
<accession>Q8PZ28</accession>
<gene>
    <name type="ordered locus">MM_0666</name>
</gene>
<feature type="chain" id="PRO_0000139304" description="Putative nickel-responsive regulator 1">
    <location>
        <begin position="1"/>
        <end position="146"/>
    </location>
</feature>
<feature type="binding site" evidence="1">
    <location>
        <position position="81"/>
    </location>
    <ligand>
        <name>Ni(2+)</name>
        <dbReference type="ChEBI" id="CHEBI:49786"/>
    </ligand>
</feature>
<feature type="binding site" evidence="1">
    <location>
        <position position="92"/>
    </location>
    <ligand>
        <name>Ni(2+)</name>
        <dbReference type="ChEBI" id="CHEBI:49786"/>
    </ligand>
</feature>
<feature type="binding site" evidence="2">
    <location>
        <position position="94"/>
    </location>
    <ligand>
        <name>Ni(2+)</name>
        <dbReference type="ChEBI" id="CHEBI:49786"/>
    </ligand>
</feature>
<feature type="binding site" evidence="1">
    <location>
        <position position="100"/>
    </location>
    <ligand>
        <name>Ni(2+)</name>
        <dbReference type="ChEBI" id="CHEBI:49786"/>
    </ligand>
</feature>
<comment type="function">
    <text evidence="3">Transcriptional regulator.</text>
</comment>
<comment type="cofactor">
    <cofactor evidence="1">
        <name>Ni(2+)</name>
        <dbReference type="ChEBI" id="CHEBI:49786"/>
    </cofactor>
    <text evidence="1">Binds 1 nickel ion per subunit.</text>
</comment>
<comment type="similarity">
    <text evidence="3">Belongs to the transcriptional regulatory CopG/NikR family.</text>
</comment>
<dbReference type="EMBL" id="AE008384">
    <property type="protein sequence ID" value="AAM30362.1"/>
    <property type="molecule type" value="Genomic_DNA"/>
</dbReference>
<dbReference type="SMR" id="Q8PZ28"/>
<dbReference type="KEGG" id="mma:MM_0666"/>
<dbReference type="PATRIC" id="fig|192952.21.peg.787"/>
<dbReference type="eggNOG" id="arCOG01008">
    <property type="taxonomic scope" value="Archaea"/>
</dbReference>
<dbReference type="HOGENOM" id="CLU_113319_1_2_2"/>
<dbReference type="Proteomes" id="UP000000595">
    <property type="component" value="Chromosome"/>
</dbReference>
<dbReference type="GO" id="GO:0003677">
    <property type="term" value="F:DNA binding"/>
    <property type="evidence" value="ECO:0007669"/>
    <property type="project" value="UniProtKB-KW"/>
</dbReference>
<dbReference type="GO" id="GO:0003700">
    <property type="term" value="F:DNA-binding transcription factor activity"/>
    <property type="evidence" value="ECO:0007669"/>
    <property type="project" value="UniProtKB-UniRule"/>
</dbReference>
<dbReference type="GO" id="GO:0016151">
    <property type="term" value="F:nickel cation binding"/>
    <property type="evidence" value="ECO:0007669"/>
    <property type="project" value="UniProtKB-UniRule"/>
</dbReference>
<dbReference type="GO" id="GO:0010045">
    <property type="term" value="P:response to nickel cation"/>
    <property type="evidence" value="ECO:0007669"/>
    <property type="project" value="InterPro"/>
</dbReference>
<dbReference type="CDD" id="cd22231">
    <property type="entry name" value="RHH_NikR_HicB-like"/>
    <property type="match status" value="1"/>
</dbReference>
<dbReference type="Gene3D" id="3.30.70.1150">
    <property type="entry name" value="ACT-like. Chain A, domain 2"/>
    <property type="match status" value="1"/>
</dbReference>
<dbReference type="Gene3D" id="1.10.1220.10">
    <property type="entry name" value="Met repressor-like"/>
    <property type="match status" value="1"/>
</dbReference>
<dbReference type="HAMAP" id="MF_00476">
    <property type="entry name" value="NikR"/>
    <property type="match status" value="1"/>
</dbReference>
<dbReference type="InterPro" id="IPR027271">
    <property type="entry name" value="Acetolactate_synth/TF_NikR_C"/>
</dbReference>
<dbReference type="InterPro" id="IPR045865">
    <property type="entry name" value="ACT-like_dom_sf"/>
</dbReference>
<dbReference type="InterPro" id="IPR013321">
    <property type="entry name" value="Arc_rbn_hlx_hlx"/>
</dbReference>
<dbReference type="InterPro" id="IPR002145">
    <property type="entry name" value="CopG"/>
</dbReference>
<dbReference type="InterPro" id="IPR050192">
    <property type="entry name" value="CopG/NikR_regulator"/>
</dbReference>
<dbReference type="InterPro" id="IPR022988">
    <property type="entry name" value="Ni_resp_reg_NikR"/>
</dbReference>
<dbReference type="InterPro" id="IPR010985">
    <property type="entry name" value="Ribbon_hlx_hlx"/>
</dbReference>
<dbReference type="InterPro" id="IPR014864">
    <property type="entry name" value="TF_NikR_Ni-bd_C"/>
</dbReference>
<dbReference type="NCBIfam" id="NF001884">
    <property type="entry name" value="PRK00630.1"/>
    <property type="match status" value="1"/>
</dbReference>
<dbReference type="NCBIfam" id="NF002169">
    <property type="entry name" value="PRK01002.1"/>
    <property type="match status" value="1"/>
</dbReference>
<dbReference type="NCBIfam" id="NF002815">
    <property type="entry name" value="PRK02967.1"/>
    <property type="match status" value="1"/>
</dbReference>
<dbReference type="NCBIfam" id="NF003381">
    <property type="entry name" value="PRK04460.1"/>
    <property type="match status" value="1"/>
</dbReference>
<dbReference type="PANTHER" id="PTHR34719">
    <property type="entry name" value="NICKEL-RESPONSIVE REGULATOR"/>
    <property type="match status" value="1"/>
</dbReference>
<dbReference type="PANTHER" id="PTHR34719:SF2">
    <property type="entry name" value="NICKEL-RESPONSIVE REGULATOR"/>
    <property type="match status" value="1"/>
</dbReference>
<dbReference type="Pfam" id="PF08753">
    <property type="entry name" value="NikR_C"/>
    <property type="match status" value="1"/>
</dbReference>
<dbReference type="Pfam" id="PF01402">
    <property type="entry name" value="RHH_1"/>
    <property type="match status" value="1"/>
</dbReference>
<dbReference type="SUPFAM" id="SSF55021">
    <property type="entry name" value="ACT-like"/>
    <property type="match status" value="1"/>
</dbReference>
<dbReference type="SUPFAM" id="SSF47598">
    <property type="entry name" value="Ribbon-helix-helix"/>
    <property type="match status" value="1"/>
</dbReference>
<keyword id="KW-0238">DNA-binding</keyword>
<keyword id="KW-0479">Metal-binding</keyword>
<keyword id="KW-0533">Nickel</keyword>
<keyword id="KW-0804">Transcription</keyword>
<keyword id="KW-0805">Transcription regulation</keyword>